<reference key="1">
    <citation type="journal article" date="2004" name="Nature">
        <title>Genome evolution in yeasts.</title>
        <authorList>
            <person name="Dujon B."/>
            <person name="Sherman D."/>
            <person name="Fischer G."/>
            <person name="Durrens P."/>
            <person name="Casaregola S."/>
            <person name="Lafontaine I."/>
            <person name="de Montigny J."/>
            <person name="Marck C."/>
            <person name="Neuveglise C."/>
            <person name="Talla E."/>
            <person name="Goffard N."/>
            <person name="Frangeul L."/>
            <person name="Aigle M."/>
            <person name="Anthouard V."/>
            <person name="Babour A."/>
            <person name="Barbe V."/>
            <person name="Barnay S."/>
            <person name="Blanchin S."/>
            <person name="Beckerich J.-M."/>
            <person name="Beyne E."/>
            <person name="Bleykasten C."/>
            <person name="Boisrame A."/>
            <person name="Boyer J."/>
            <person name="Cattolico L."/>
            <person name="Confanioleri F."/>
            <person name="de Daruvar A."/>
            <person name="Despons L."/>
            <person name="Fabre E."/>
            <person name="Fairhead C."/>
            <person name="Ferry-Dumazet H."/>
            <person name="Groppi A."/>
            <person name="Hantraye F."/>
            <person name="Hennequin C."/>
            <person name="Jauniaux N."/>
            <person name="Joyet P."/>
            <person name="Kachouri R."/>
            <person name="Kerrest A."/>
            <person name="Koszul R."/>
            <person name="Lemaire M."/>
            <person name="Lesur I."/>
            <person name="Ma L."/>
            <person name="Muller H."/>
            <person name="Nicaud J.-M."/>
            <person name="Nikolski M."/>
            <person name="Oztas S."/>
            <person name="Ozier-Kalogeropoulos O."/>
            <person name="Pellenz S."/>
            <person name="Potier S."/>
            <person name="Richard G.-F."/>
            <person name="Straub M.-L."/>
            <person name="Suleau A."/>
            <person name="Swennen D."/>
            <person name="Tekaia F."/>
            <person name="Wesolowski-Louvel M."/>
            <person name="Westhof E."/>
            <person name="Wirth B."/>
            <person name="Zeniou-Meyer M."/>
            <person name="Zivanovic Y."/>
            <person name="Bolotin-Fukuhara M."/>
            <person name="Thierry A."/>
            <person name="Bouchier C."/>
            <person name="Caudron B."/>
            <person name="Scarpelli C."/>
            <person name="Gaillardin C."/>
            <person name="Weissenbach J."/>
            <person name="Wincker P."/>
            <person name="Souciet J.-L."/>
        </authorList>
    </citation>
    <scope>NUCLEOTIDE SEQUENCE [LARGE SCALE GENOMIC DNA]</scope>
    <source>
        <strain>ATCC 36239 / CBS 767 / BCRC 21394 / JCM 1990 / NBRC 0083 / IGC 2968</strain>
    </source>
</reference>
<accession>Q6BI20</accession>
<protein>
    <recommendedName>
        <fullName>Enolase 2</fullName>
        <ecNumber>4.2.1.11</ecNumber>
    </recommendedName>
    <alternativeName>
        <fullName>2-phospho-D-glycerate hydro-lyase 2</fullName>
    </alternativeName>
    <alternativeName>
        <fullName>2-phosphoglycerate dehydratase 2</fullName>
    </alternativeName>
</protein>
<sequence length="439" mass="47239">MAVTKLFARYVYDSRGNPTVEVDLTTDKGLFRSIVPSGASTGIHEALELRDGDKSKWLGKGVTKAVANVNELIAPAFVKANLDVTNQSAVDDFLNKLDGTPNKSKLGANAILGVSLATAKAAAAEKNVPLYQHLADISGSKQDKFVLPVPFQNVLNGGSHAGGALAFQEFMIVPTDAPTFSEALRMGSEVYHNLKSLTKKKYGQSAGNVGDEGGVAPDIGSPREALDLIMDAIDKAGYKGKIGIALDVAASEFYKDGKYDLDFKNPNSDESKWLSGEQLASLYEELINEYPIVSIEDPFGEDDWDAWVHFYSKVSSKVQIVGDDLTVTNPLRIKTAIEKKAANALLLKVNQIGSLTESIKAAQDSFDATWGVMVSHRSGETEDTFIADLSVGLRAGQIKTGAPARSERLAKLNQILRIEEELGDKAIYAGKNFHAASQL</sequence>
<dbReference type="EC" id="4.2.1.11"/>
<dbReference type="EMBL" id="CR382139">
    <property type="protein sequence ID" value="CAG90637.1"/>
    <property type="molecule type" value="Genomic_DNA"/>
</dbReference>
<dbReference type="RefSeq" id="XP_462151.1">
    <property type="nucleotide sequence ID" value="XM_462151.1"/>
</dbReference>
<dbReference type="SMR" id="Q6BI20"/>
<dbReference type="FunCoup" id="Q6BI20">
    <property type="interactions" value="1272"/>
</dbReference>
<dbReference type="STRING" id="284592.Q6BI20"/>
<dbReference type="GeneID" id="2905065"/>
<dbReference type="KEGG" id="dha:DEHA2G14058g"/>
<dbReference type="VEuPathDB" id="FungiDB:DEHA2G14058g"/>
<dbReference type="eggNOG" id="KOG2670">
    <property type="taxonomic scope" value="Eukaryota"/>
</dbReference>
<dbReference type="HOGENOM" id="CLU_031223_0_0_1"/>
<dbReference type="InParanoid" id="Q6BI20"/>
<dbReference type="OMA" id="RCMMSHR"/>
<dbReference type="OrthoDB" id="1739814at2759"/>
<dbReference type="UniPathway" id="UPA00109">
    <property type="reaction ID" value="UER00187"/>
</dbReference>
<dbReference type="Proteomes" id="UP000000599">
    <property type="component" value="Chromosome G"/>
</dbReference>
<dbReference type="GO" id="GO:0000015">
    <property type="term" value="C:phosphopyruvate hydratase complex"/>
    <property type="evidence" value="ECO:0007669"/>
    <property type="project" value="InterPro"/>
</dbReference>
<dbReference type="GO" id="GO:0000287">
    <property type="term" value="F:magnesium ion binding"/>
    <property type="evidence" value="ECO:0007669"/>
    <property type="project" value="InterPro"/>
</dbReference>
<dbReference type="GO" id="GO:0004634">
    <property type="term" value="F:phosphopyruvate hydratase activity"/>
    <property type="evidence" value="ECO:0007669"/>
    <property type="project" value="UniProtKB-EC"/>
</dbReference>
<dbReference type="GO" id="GO:0006096">
    <property type="term" value="P:glycolytic process"/>
    <property type="evidence" value="ECO:0007669"/>
    <property type="project" value="UniProtKB-UniPathway"/>
</dbReference>
<dbReference type="CDD" id="cd03313">
    <property type="entry name" value="enolase"/>
    <property type="match status" value="1"/>
</dbReference>
<dbReference type="FunFam" id="3.30.390.10:FF:000001">
    <property type="entry name" value="Enolase"/>
    <property type="match status" value="1"/>
</dbReference>
<dbReference type="FunFam" id="3.20.20.120:FF:000002">
    <property type="entry name" value="Enolase 1"/>
    <property type="match status" value="1"/>
</dbReference>
<dbReference type="Gene3D" id="3.20.20.120">
    <property type="entry name" value="Enolase-like C-terminal domain"/>
    <property type="match status" value="1"/>
</dbReference>
<dbReference type="Gene3D" id="3.30.390.10">
    <property type="entry name" value="Enolase-like, N-terminal domain"/>
    <property type="match status" value="1"/>
</dbReference>
<dbReference type="HAMAP" id="MF_00318">
    <property type="entry name" value="Enolase"/>
    <property type="match status" value="1"/>
</dbReference>
<dbReference type="InterPro" id="IPR000941">
    <property type="entry name" value="Enolase"/>
</dbReference>
<dbReference type="InterPro" id="IPR036849">
    <property type="entry name" value="Enolase-like_C_sf"/>
</dbReference>
<dbReference type="InterPro" id="IPR029017">
    <property type="entry name" value="Enolase-like_N"/>
</dbReference>
<dbReference type="InterPro" id="IPR020810">
    <property type="entry name" value="Enolase_C"/>
</dbReference>
<dbReference type="InterPro" id="IPR020809">
    <property type="entry name" value="Enolase_CS"/>
</dbReference>
<dbReference type="InterPro" id="IPR020811">
    <property type="entry name" value="Enolase_N"/>
</dbReference>
<dbReference type="NCBIfam" id="TIGR01060">
    <property type="entry name" value="eno"/>
    <property type="match status" value="1"/>
</dbReference>
<dbReference type="PANTHER" id="PTHR11902">
    <property type="entry name" value="ENOLASE"/>
    <property type="match status" value="1"/>
</dbReference>
<dbReference type="PANTHER" id="PTHR11902:SF1">
    <property type="entry name" value="ENOLASE"/>
    <property type="match status" value="1"/>
</dbReference>
<dbReference type="Pfam" id="PF00113">
    <property type="entry name" value="Enolase_C"/>
    <property type="match status" value="1"/>
</dbReference>
<dbReference type="Pfam" id="PF03952">
    <property type="entry name" value="Enolase_N"/>
    <property type="match status" value="1"/>
</dbReference>
<dbReference type="PIRSF" id="PIRSF001400">
    <property type="entry name" value="Enolase"/>
    <property type="match status" value="1"/>
</dbReference>
<dbReference type="PRINTS" id="PR00148">
    <property type="entry name" value="ENOLASE"/>
</dbReference>
<dbReference type="SFLD" id="SFLDF00002">
    <property type="entry name" value="enolase"/>
    <property type="match status" value="1"/>
</dbReference>
<dbReference type="SFLD" id="SFLDG00178">
    <property type="entry name" value="enolase"/>
    <property type="match status" value="1"/>
</dbReference>
<dbReference type="SMART" id="SM01192">
    <property type="entry name" value="Enolase_C"/>
    <property type="match status" value="1"/>
</dbReference>
<dbReference type="SMART" id="SM01193">
    <property type="entry name" value="Enolase_N"/>
    <property type="match status" value="1"/>
</dbReference>
<dbReference type="SUPFAM" id="SSF51604">
    <property type="entry name" value="Enolase C-terminal domain-like"/>
    <property type="match status" value="1"/>
</dbReference>
<dbReference type="SUPFAM" id="SSF54826">
    <property type="entry name" value="Enolase N-terminal domain-like"/>
    <property type="match status" value="1"/>
</dbReference>
<dbReference type="PROSITE" id="PS00164">
    <property type="entry name" value="ENOLASE"/>
    <property type="match status" value="1"/>
</dbReference>
<organism>
    <name type="scientific">Debaryomyces hansenii (strain ATCC 36239 / CBS 767 / BCRC 21394 / JCM 1990 / NBRC 0083 / IGC 2968)</name>
    <name type="common">Yeast</name>
    <name type="synonym">Torulaspora hansenii</name>
    <dbReference type="NCBI Taxonomy" id="284592"/>
    <lineage>
        <taxon>Eukaryota</taxon>
        <taxon>Fungi</taxon>
        <taxon>Dikarya</taxon>
        <taxon>Ascomycota</taxon>
        <taxon>Saccharomycotina</taxon>
        <taxon>Pichiomycetes</taxon>
        <taxon>Debaryomycetaceae</taxon>
        <taxon>Debaryomyces</taxon>
    </lineage>
</organism>
<feature type="chain" id="PRO_0000134051" description="Enolase 2">
    <location>
        <begin position="1"/>
        <end position="439"/>
    </location>
</feature>
<feature type="active site" description="Proton donor" evidence="1">
    <location>
        <position position="212"/>
    </location>
</feature>
<feature type="active site" description="Proton acceptor" evidence="1">
    <location>
        <position position="348"/>
    </location>
</feature>
<feature type="binding site" evidence="1">
    <location>
        <position position="160"/>
    </location>
    <ligand>
        <name>substrate</name>
    </ligand>
</feature>
<feature type="binding site" evidence="1">
    <location>
        <position position="169"/>
    </location>
    <ligand>
        <name>substrate</name>
    </ligand>
</feature>
<feature type="binding site" evidence="1">
    <location>
        <position position="247"/>
    </location>
    <ligand>
        <name>Mg(2+)</name>
        <dbReference type="ChEBI" id="CHEBI:18420"/>
    </ligand>
</feature>
<feature type="binding site" evidence="1">
    <location>
        <position position="296"/>
    </location>
    <ligand>
        <name>Mg(2+)</name>
        <dbReference type="ChEBI" id="CHEBI:18420"/>
    </ligand>
</feature>
<feature type="binding site" evidence="1">
    <location>
        <position position="296"/>
    </location>
    <ligand>
        <name>substrate</name>
    </ligand>
</feature>
<feature type="binding site" evidence="1">
    <location>
        <position position="323"/>
    </location>
    <ligand>
        <name>Mg(2+)</name>
        <dbReference type="ChEBI" id="CHEBI:18420"/>
    </ligand>
</feature>
<feature type="binding site" evidence="1">
    <location>
        <position position="323"/>
    </location>
    <ligand>
        <name>substrate</name>
    </ligand>
</feature>
<feature type="binding site" evidence="1">
    <location>
        <begin position="375"/>
        <end position="378"/>
    </location>
    <ligand>
        <name>substrate</name>
    </ligand>
</feature>
<feature type="binding site" evidence="1">
    <location>
        <position position="399"/>
    </location>
    <ligand>
        <name>substrate</name>
    </ligand>
</feature>
<evidence type="ECO:0000250" key="1"/>
<evidence type="ECO:0000305" key="2"/>
<gene>
    <name type="primary">ENO2</name>
    <name type="ordered locus">DEHA2G14058g</name>
</gene>
<comment type="catalytic activity">
    <reaction>
        <text>(2R)-2-phosphoglycerate = phosphoenolpyruvate + H2O</text>
        <dbReference type="Rhea" id="RHEA:10164"/>
        <dbReference type="ChEBI" id="CHEBI:15377"/>
        <dbReference type="ChEBI" id="CHEBI:58289"/>
        <dbReference type="ChEBI" id="CHEBI:58702"/>
        <dbReference type="EC" id="4.2.1.11"/>
    </reaction>
</comment>
<comment type="cofactor">
    <cofactor evidence="1">
        <name>Mg(2+)</name>
        <dbReference type="ChEBI" id="CHEBI:18420"/>
    </cofactor>
    <text evidence="1">Mg(2+) is required for catalysis and for stabilizing the dimer.</text>
</comment>
<comment type="pathway">
    <text>Carbohydrate degradation; glycolysis; pyruvate from D-glyceraldehyde 3-phosphate: step 4/5.</text>
</comment>
<comment type="subunit">
    <text evidence="1">Homodimer.</text>
</comment>
<comment type="subcellular location">
    <subcellularLocation>
        <location evidence="1">Cytoplasm</location>
    </subcellularLocation>
</comment>
<comment type="similarity">
    <text evidence="2">Belongs to the enolase family.</text>
</comment>
<name>ENO2_DEBHA</name>
<keyword id="KW-0963">Cytoplasm</keyword>
<keyword id="KW-0324">Glycolysis</keyword>
<keyword id="KW-0456">Lyase</keyword>
<keyword id="KW-0460">Magnesium</keyword>
<keyword id="KW-0479">Metal-binding</keyword>
<keyword id="KW-1185">Reference proteome</keyword>
<proteinExistence type="inferred from homology"/>